<name>HIS52_NITWN</name>
<reference key="1">
    <citation type="journal article" date="2006" name="Appl. Environ. Microbiol.">
        <title>Genome sequence of the chemolithoautotrophic nitrite-oxidizing bacterium Nitrobacter winogradskyi Nb-255.</title>
        <authorList>
            <person name="Starkenburg S.R."/>
            <person name="Chain P.S.G."/>
            <person name="Sayavedra-Soto L.A."/>
            <person name="Hauser L."/>
            <person name="Land M.L."/>
            <person name="Larimer F.W."/>
            <person name="Malfatti S.A."/>
            <person name="Klotz M.G."/>
            <person name="Bottomley P.J."/>
            <person name="Arp D.J."/>
            <person name="Hickey W.J."/>
        </authorList>
    </citation>
    <scope>NUCLEOTIDE SEQUENCE [LARGE SCALE GENOMIC DNA]</scope>
    <source>
        <strain>ATCC 25391 / DSM 10237 / CIP 104748 / NCIMB 11846 / Nb-255</strain>
    </source>
</reference>
<comment type="function">
    <text evidence="1">IGPS catalyzes the conversion of PRFAR and glutamine to IGP, AICAR and glutamate. The HisH subunit provides the glutamine amidotransferase activity that produces the ammonia necessary to HisF for the synthesis of IGP and AICAR.</text>
</comment>
<comment type="catalytic activity">
    <reaction evidence="1">
        <text>5-[(5-phospho-1-deoxy-D-ribulos-1-ylimino)methylamino]-1-(5-phospho-beta-D-ribosyl)imidazole-4-carboxamide + L-glutamine = D-erythro-1-(imidazol-4-yl)glycerol 3-phosphate + 5-amino-1-(5-phospho-beta-D-ribosyl)imidazole-4-carboxamide + L-glutamate + H(+)</text>
        <dbReference type="Rhea" id="RHEA:24793"/>
        <dbReference type="ChEBI" id="CHEBI:15378"/>
        <dbReference type="ChEBI" id="CHEBI:29985"/>
        <dbReference type="ChEBI" id="CHEBI:58278"/>
        <dbReference type="ChEBI" id="CHEBI:58359"/>
        <dbReference type="ChEBI" id="CHEBI:58475"/>
        <dbReference type="ChEBI" id="CHEBI:58525"/>
        <dbReference type="EC" id="4.3.2.10"/>
    </reaction>
</comment>
<comment type="catalytic activity">
    <reaction evidence="1">
        <text>L-glutamine + H2O = L-glutamate + NH4(+)</text>
        <dbReference type="Rhea" id="RHEA:15889"/>
        <dbReference type="ChEBI" id="CHEBI:15377"/>
        <dbReference type="ChEBI" id="CHEBI:28938"/>
        <dbReference type="ChEBI" id="CHEBI:29985"/>
        <dbReference type="ChEBI" id="CHEBI:58359"/>
        <dbReference type="EC" id="3.5.1.2"/>
    </reaction>
</comment>
<comment type="pathway">
    <text evidence="1">Amino-acid biosynthesis; L-histidine biosynthesis; L-histidine from 5-phospho-alpha-D-ribose 1-diphosphate: step 5/9.</text>
</comment>
<comment type="subunit">
    <text evidence="1">Heterodimer of HisH and HisF.</text>
</comment>
<comment type="subcellular location">
    <subcellularLocation>
        <location evidence="1">Cytoplasm</location>
    </subcellularLocation>
</comment>
<gene>
    <name evidence="1" type="primary">hisH2</name>
    <name type="ordered locus">Nwi_2391</name>
</gene>
<keyword id="KW-0028">Amino-acid biosynthesis</keyword>
<keyword id="KW-0963">Cytoplasm</keyword>
<keyword id="KW-0315">Glutamine amidotransferase</keyword>
<keyword id="KW-0368">Histidine biosynthesis</keyword>
<keyword id="KW-0378">Hydrolase</keyword>
<keyword id="KW-0456">Lyase</keyword>
<keyword id="KW-1185">Reference proteome</keyword>
<sequence length="212" mass="23414">MARVAIIDYGINNVRSVRNAVEYCGHEAVVTHGNDGIADASHIILPGVGAFGDAMKKIRDRGLDEILARGVCEAGKPLLAVCLGMQLLAKTSEEHADDGEFFQGLGLIEADVRRLRPKDPDLKIPHMGWNNITKLREHPILVNMRETNLAFYFVHSFAMSCENEDDVVGRATYGQDVTAIVARDNIVGTQFHPEKSQDSGIELMSNFLQWNP</sequence>
<organism>
    <name type="scientific">Nitrobacter winogradskyi (strain ATCC 25391 / DSM 10237 / CIP 104748 / NCIMB 11846 / Nb-255)</name>
    <dbReference type="NCBI Taxonomy" id="323098"/>
    <lineage>
        <taxon>Bacteria</taxon>
        <taxon>Pseudomonadati</taxon>
        <taxon>Pseudomonadota</taxon>
        <taxon>Alphaproteobacteria</taxon>
        <taxon>Hyphomicrobiales</taxon>
        <taxon>Nitrobacteraceae</taxon>
        <taxon>Nitrobacter</taxon>
    </lineage>
</organism>
<protein>
    <recommendedName>
        <fullName evidence="1">Imidazole glycerol phosphate synthase subunit HisH 2</fullName>
        <ecNumber evidence="1">4.3.2.10</ecNumber>
    </recommendedName>
    <alternativeName>
        <fullName evidence="1">IGP synthase glutaminase subunit 2</fullName>
        <ecNumber evidence="1">3.5.1.2</ecNumber>
    </alternativeName>
    <alternativeName>
        <fullName evidence="1">IGP synthase subunit HisH 2</fullName>
    </alternativeName>
    <alternativeName>
        <fullName evidence="1">ImGP synthase subunit HisH 2</fullName>
        <shortName evidence="1">IGPS subunit HisH 2</shortName>
    </alternativeName>
</protein>
<feature type="chain" id="PRO_0000231738" description="Imidazole glycerol phosphate synthase subunit HisH 2">
    <location>
        <begin position="1"/>
        <end position="212"/>
    </location>
</feature>
<feature type="domain" description="Glutamine amidotransferase type-1" evidence="1">
    <location>
        <begin position="3"/>
        <end position="212"/>
    </location>
</feature>
<feature type="active site" description="Nucleophile" evidence="1">
    <location>
        <position position="82"/>
    </location>
</feature>
<feature type="active site" evidence="1">
    <location>
        <position position="192"/>
    </location>
</feature>
<feature type="active site" evidence="1">
    <location>
        <position position="194"/>
    </location>
</feature>
<proteinExistence type="inferred from homology"/>
<accession>Q3SPZ6</accession>
<evidence type="ECO:0000255" key="1">
    <source>
        <dbReference type="HAMAP-Rule" id="MF_00278"/>
    </source>
</evidence>
<dbReference type="EC" id="4.3.2.10" evidence="1"/>
<dbReference type="EC" id="3.5.1.2" evidence="1"/>
<dbReference type="EMBL" id="CP000115">
    <property type="protein sequence ID" value="ABA05645.1"/>
    <property type="molecule type" value="Genomic_DNA"/>
</dbReference>
<dbReference type="RefSeq" id="WP_011315606.1">
    <property type="nucleotide sequence ID" value="NC_007406.1"/>
</dbReference>
<dbReference type="SMR" id="Q3SPZ6"/>
<dbReference type="STRING" id="323098.Nwi_2391"/>
<dbReference type="KEGG" id="nwi:Nwi_2391"/>
<dbReference type="eggNOG" id="COG0118">
    <property type="taxonomic scope" value="Bacteria"/>
</dbReference>
<dbReference type="HOGENOM" id="CLU_071837_2_0_5"/>
<dbReference type="OrthoDB" id="9807137at2"/>
<dbReference type="UniPathway" id="UPA00031">
    <property type="reaction ID" value="UER00010"/>
</dbReference>
<dbReference type="Proteomes" id="UP000002531">
    <property type="component" value="Chromosome"/>
</dbReference>
<dbReference type="GO" id="GO:0005737">
    <property type="term" value="C:cytoplasm"/>
    <property type="evidence" value="ECO:0007669"/>
    <property type="project" value="UniProtKB-SubCell"/>
</dbReference>
<dbReference type="GO" id="GO:0004359">
    <property type="term" value="F:glutaminase activity"/>
    <property type="evidence" value="ECO:0007669"/>
    <property type="project" value="UniProtKB-EC"/>
</dbReference>
<dbReference type="GO" id="GO:0000107">
    <property type="term" value="F:imidazoleglycerol-phosphate synthase activity"/>
    <property type="evidence" value="ECO:0007669"/>
    <property type="project" value="UniProtKB-UniRule"/>
</dbReference>
<dbReference type="GO" id="GO:0016829">
    <property type="term" value="F:lyase activity"/>
    <property type="evidence" value="ECO:0007669"/>
    <property type="project" value="UniProtKB-KW"/>
</dbReference>
<dbReference type="GO" id="GO:0000105">
    <property type="term" value="P:L-histidine biosynthetic process"/>
    <property type="evidence" value="ECO:0007669"/>
    <property type="project" value="UniProtKB-UniRule"/>
</dbReference>
<dbReference type="CDD" id="cd01748">
    <property type="entry name" value="GATase1_IGP_Synthase"/>
    <property type="match status" value="1"/>
</dbReference>
<dbReference type="Gene3D" id="3.40.50.880">
    <property type="match status" value="1"/>
</dbReference>
<dbReference type="HAMAP" id="MF_00278">
    <property type="entry name" value="HisH"/>
    <property type="match status" value="1"/>
</dbReference>
<dbReference type="InterPro" id="IPR029062">
    <property type="entry name" value="Class_I_gatase-like"/>
</dbReference>
<dbReference type="InterPro" id="IPR017926">
    <property type="entry name" value="GATASE"/>
</dbReference>
<dbReference type="InterPro" id="IPR010139">
    <property type="entry name" value="Imidazole-glycPsynth_HisH"/>
</dbReference>
<dbReference type="NCBIfam" id="TIGR01855">
    <property type="entry name" value="IMP_synth_hisH"/>
    <property type="match status" value="1"/>
</dbReference>
<dbReference type="PANTHER" id="PTHR42701">
    <property type="entry name" value="IMIDAZOLE GLYCEROL PHOSPHATE SYNTHASE SUBUNIT HISH"/>
    <property type="match status" value="1"/>
</dbReference>
<dbReference type="PANTHER" id="PTHR42701:SF1">
    <property type="entry name" value="IMIDAZOLE GLYCEROL PHOSPHATE SYNTHASE SUBUNIT HISH"/>
    <property type="match status" value="1"/>
</dbReference>
<dbReference type="Pfam" id="PF00117">
    <property type="entry name" value="GATase"/>
    <property type="match status" value="1"/>
</dbReference>
<dbReference type="PIRSF" id="PIRSF000495">
    <property type="entry name" value="Amidotransf_hisH"/>
    <property type="match status" value="1"/>
</dbReference>
<dbReference type="SUPFAM" id="SSF52317">
    <property type="entry name" value="Class I glutamine amidotransferase-like"/>
    <property type="match status" value="1"/>
</dbReference>
<dbReference type="PROSITE" id="PS51273">
    <property type="entry name" value="GATASE_TYPE_1"/>
    <property type="match status" value="1"/>
</dbReference>